<comment type="function">
    <text evidence="1">Essential for respiratory growth and required for mitochondrial protein synthesis. Required for vacuolar acidification (By similarity).</text>
</comment>
<comment type="subcellular location">
    <subcellularLocation>
        <location evidence="1">Mitochondrion</location>
    </subcellularLocation>
</comment>
<comment type="similarity">
    <text evidence="2">Belongs to the RRG1 family.</text>
</comment>
<dbReference type="EMBL" id="CR382126">
    <property type="protein sequence ID" value="CAG98362.1"/>
    <property type="molecule type" value="Genomic_DNA"/>
</dbReference>
<dbReference type="RefSeq" id="XP_455654.1">
    <property type="nucleotide sequence ID" value="XM_455654.1"/>
</dbReference>
<dbReference type="SMR" id="Q6CK85"/>
<dbReference type="FunCoup" id="Q6CK85">
    <property type="interactions" value="37"/>
</dbReference>
<dbReference type="STRING" id="284590.Q6CK85"/>
<dbReference type="PaxDb" id="284590-Q6CK85"/>
<dbReference type="KEGG" id="kla:KLLA0_F12694g"/>
<dbReference type="eggNOG" id="ENOG502RYGE">
    <property type="taxonomic scope" value="Eukaryota"/>
</dbReference>
<dbReference type="HOGENOM" id="CLU_062256_0_0_1"/>
<dbReference type="InParanoid" id="Q6CK85"/>
<dbReference type="OMA" id="RIWFIRS"/>
<dbReference type="Proteomes" id="UP000000598">
    <property type="component" value="Chromosome F"/>
</dbReference>
<dbReference type="GO" id="GO:0005739">
    <property type="term" value="C:mitochondrion"/>
    <property type="evidence" value="ECO:0007669"/>
    <property type="project" value="UniProtKB-SubCell"/>
</dbReference>
<name>RRG1_KLULA</name>
<gene>
    <name type="primary">RRG1</name>
    <name type="ordered locus">KLLA0F12694g</name>
</gene>
<protein>
    <recommendedName>
        <fullName>Required for respiratory growth protein 1, mitochondrial</fullName>
    </recommendedName>
</protein>
<accession>Q6CK85</accession>
<keyword id="KW-0496">Mitochondrion</keyword>
<keyword id="KW-1185">Reference proteome</keyword>
<proteinExistence type="inferred from homology"/>
<reference key="1">
    <citation type="journal article" date="2004" name="Nature">
        <title>Genome evolution in yeasts.</title>
        <authorList>
            <person name="Dujon B."/>
            <person name="Sherman D."/>
            <person name="Fischer G."/>
            <person name="Durrens P."/>
            <person name="Casaregola S."/>
            <person name="Lafontaine I."/>
            <person name="de Montigny J."/>
            <person name="Marck C."/>
            <person name="Neuveglise C."/>
            <person name="Talla E."/>
            <person name="Goffard N."/>
            <person name="Frangeul L."/>
            <person name="Aigle M."/>
            <person name="Anthouard V."/>
            <person name="Babour A."/>
            <person name="Barbe V."/>
            <person name="Barnay S."/>
            <person name="Blanchin S."/>
            <person name="Beckerich J.-M."/>
            <person name="Beyne E."/>
            <person name="Bleykasten C."/>
            <person name="Boisrame A."/>
            <person name="Boyer J."/>
            <person name="Cattolico L."/>
            <person name="Confanioleri F."/>
            <person name="de Daruvar A."/>
            <person name="Despons L."/>
            <person name="Fabre E."/>
            <person name="Fairhead C."/>
            <person name="Ferry-Dumazet H."/>
            <person name="Groppi A."/>
            <person name="Hantraye F."/>
            <person name="Hennequin C."/>
            <person name="Jauniaux N."/>
            <person name="Joyet P."/>
            <person name="Kachouri R."/>
            <person name="Kerrest A."/>
            <person name="Koszul R."/>
            <person name="Lemaire M."/>
            <person name="Lesur I."/>
            <person name="Ma L."/>
            <person name="Muller H."/>
            <person name="Nicaud J.-M."/>
            <person name="Nikolski M."/>
            <person name="Oztas S."/>
            <person name="Ozier-Kalogeropoulos O."/>
            <person name="Pellenz S."/>
            <person name="Potier S."/>
            <person name="Richard G.-F."/>
            <person name="Straub M.-L."/>
            <person name="Suleau A."/>
            <person name="Swennen D."/>
            <person name="Tekaia F."/>
            <person name="Wesolowski-Louvel M."/>
            <person name="Westhof E."/>
            <person name="Wirth B."/>
            <person name="Zeniou-Meyer M."/>
            <person name="Zivanovic Y."/>
            <person name="Bolotin-Fukuhara M."/>
            <person name="Thierry A."/>
            <person name="Bouchier C."/>
            <person name="Caudron B."/>
            <person name="Scarpelli C."/>
            <person name="Gaillardin C."/>
            <person name="Weissenbach J."/>
            <person name="Wincker P."/>
            <person name="Souciet J.-L."/>
        </authorList>
    </citation>
    <scope>NUCLEOTIDE SEQUENCE [LARGE SCALE GENOMIC DNA]</scope>
    <source>
        <strain>ATCC 8585 / CBS 2359 / DSM 70799 / NBRC 1267 / NRRL Y-1140 / WM37</strain>
    </source>
</reference>
<organism>
    <name type="scientific">Kluyveromyces lactis (strain ATCC 8585 / CBS 2359 / DSM 70799 / NBRC 1267 / NRRL Y-1140 / WM37)</name>
    <name type="common">Yeast</name>
    <name type="synonym">Candida sphaerica</name>
    <dbReference type="NCBI Taxonomy" id="284590"/>
    <lineage>
        <taxon>Eukaryota</taxon>
        <taxon>Fungi</taxon>
        <taxon>Dikarya</taxon>
        <taxon>Ascomycota</taxon>
        <taxon>Saccharomycotina</taxon>
        <taxon>Saccharomycetes</taxon>
        <taxon>Saccharomycetales</taxon>
        <taxon>Saccharomycetaceae</taxon>
        <taxon>Kluyveromyces</taxon>
    </lineage>
</organism>
<feature type="chain" id="PRO_0000402246" description="Required for respiratory growth protein 1, mitochondrial">
    <location>
        <begin position="1"/>
        <end position="380"/>
    </location>
</feature>
<sequence length="380" mass="45095">MVRPFGEIGSHRKHVLEWYRYSLRNIRANVPTDNLQIELWNTLRQAVRRNRNHKAGWYVRGLLEDLSHLNKYIVGDDIIKLVALKNKYTEQIEPAPEPLQQANKPISGVVVTENMGDESRREKKKRLAPIPGDGDLYRYLLRYYKIYGPTKTIPRKHIDELLRPLAIHERYCKILYRIEYRIAKGPPKVSINYTNAGQSRIWFIRSPFNRKARQSKKLTGIIIKARLRAQDNLDRFRECESKLFYAFQEAQWEYTLIHKQPCSRKFNDVVTQIKSGKSNDIPAVFIDWIKPILEDMDILNRINANTQRKFTESRDHLIDGKQYEYYKQLNQRLYKKRLERFLGLKAELPTTNPFTEEKNLGALLVKWRFLRPDQLVKVKS</sequence>
<evidence type="ECO:0000250" key="1"/>
<evidence type="ECO:0000305" key="2"/>